<proteinExistence type="inferred from homology"/>
<comment type="function">
    <text evidence="6 7 9">Highly reducing polyketide synthase; part of the gene cluster that mediates the biosynthesis of the host-selective toxins (HSTs) ACR-toxins responsible for brown spot of rough lemon disease by the rough lemon pathotype (PubMed:22835272). ACR-toxins cause uncoupling of mitochondrial oxidative-phosphorylation similar to that of classic protonophore (PubMed:22846083). The structure of the major form of ACR-toxin (ACR-toxin I) consists of an alpha-dihydropyrone ring in a 19-carbon polyalcohol, a typical polyketide structure. Minor toxins were characterized as having a pyrone ring with polyalcohol side chains different in length and showing weaker toxicity (PubMed:22846083). The highly reducing polyketide synthase ACRTS2 has all necessary enzymatic domains for multiple cycles of condensation and beta-keto processing (PubMed:22779742). The cytochrome P450 monooxygenase ACRTS1 has also been shown to be essential for ACR-toxin biosynthesis, however its exact role in the pathway has not been elucidated yet (PubMed:22779742).</text>
</comment>
<comment type="pathway">
    <text evidence="7">Mycotoxin biosynthesis.</text>
</comment>
<comment type="domain">
    <text evidence="11">Multidomain protein; including a ketosynthase (KS) that catalyzes repeated decarboxylative condensation to elongate the polyketide backbone; a malonyl-CoA:ACP transacylase (MAT) that selects and transfers the extender unit malonyl-CoA; a dehydratase (DH) domain that reduces hydroxyl groups to enoyl groups; a methyltransferase (CMeT) domain responsible for the incorporation of methyl groups; an enoylreductase (ER) domain that reduces enoyl groups to alkyl group; a ketoreductase (KR) domain that catalyzes beta-ketoreduction steps; and an acyl-carrier protein (ACP) that serves as the tether of the growing and completed polyketide via its phosphopantetheinyl arm.</text>
</comment>
<comment type="disruption phenotype">
    <text evidence="7">Abolishes the production of ACR-toxin and impairs the pathogenicity (PubMed:22835272). Does not affect growth rate of cultures, sporulation, and spore germination (PubMed:22835272).</text>
</comment>
<comment type="miscellaneous">
    <text evidence="7">Gene clusters encoding host-selective toxins (HSTs) are localized on conditionally dispensable chromosomes (CDCs), also called supernumerary chromosomes, where they are present in multiple copies (PubMed:22835272). The CDCs are not essential for saprophytic growth but controls host-selective pathogenicity (PubMed:22835272). Although conventional disruption of ACRTS2 could not be accomplished due to the high number of the copies identified in the genome, the high sequence identity among these copies of ACRTS2 is likely an advantage for RNA silencing, because it allows knockdown of all copies of this gene simultaneously (PubMed:22835272).</text>
</comment>
<accession>R4WH05</accession>
<sequence>MEKDTPVAIIGVSYRAPGIGGKGLWDYLAEAKSAWTKVPPERFEHFAWYKAGEKKTGVFANEGAHFVDNVFDFDAAFFNMRADEARCADPSHRFMLEVALEAAENAGQSLLDLSGKKIGVFVGAGQHEYSHRVSDDEYAIQTFTATGVAPCMAANRLSYFFDIDGPSVVLDAACASSAYAVDMAVKAIRNGDCDGAFVGAAALNLSPSGWLVLDQSGTLSDIGRSFSYDAKASGFGRGEGAACLLIKRLEDAIRDGDPIQALIRGTACSHSGRSEGITMPSRRAQEKLIWDVHNSAGLDPSNTAVVEVFSRGHGTGTAVGDPIEAGAFTSVLARNRTAANPIYIGSLKSNFGHLEGASGVLAMIKAVLMVRNGVVLPTAGFERINEAIDNYEKIKVPTTPLPWPENEPRRCLVTNFGFGGSSSAVIIDRSPYLHALDGYEDLADIKIPRLNGSSGRSESGSGQSQRLFVFSAKTRDSLTAYLASFHEYLLKAQESHEFLKDLSYTLGQRRTHHAYRASVVANSISDLRKEIPNLKPSKIRQRSVIFVFTGQGAQYARMAYNLRQFTVFAETLEKAETQLNKMGASWSLTEELNKLTDTRINDAEISQPACTAVQLAMVALLQSWGVVPNMVTGHSSGEIAAAFTAGLLTFQEAIAISYFRGQSAVQLSAAQHEYKKGAMLALGVGSEDALKIIDEHAQGYATVAAINSPRSVTISGDKTAIENVRKAADMQGLFARMLKVEVAYHSRHMEQVAASYLKDIEPYFQGKAIPAENSGACRPVFVSSVTGQIIDAVDSSYWIKNLVQPVLFADAIKEVLTHEDQGKSQSIHGSSKTLVEIGPHAALKNPVKQTAELLSSERAWNLASLNYLPSLLRGTNDVHAILELARALFDLGASVELSGVNGTNKHNARVLTELPSYAWDRSYYELRPRVTHDKQFPGEEYHALIGRKAPSNAAQENTYRQVFTLDEMPWIRDHVVSGVTVFPMTGYMSCAIEAARRVDSAAPAAFLITDFHVVQSLEIHEEETVDLTTKLKPAATGEGTFSSKVWSFEVVSWSEANGWTRHCWGKIEPEIADLTLATPTFEASLPLVTSMAGVIEHDMDNEYHNIELRGTKYGPSFRNNVKFYEGKNYTVLEHRIRDLGDALKIPVYRGSPVSVDPPTLDSFLQGAGPFQYDGSGRRLTQMPDYISRFRISNNITSEPNHRLDVVMRRLDYDDKGGRMHVSVAVFGRGSDDQFTPIAEWESFTFRTVSSADDQSASVPDNWSWELLPRYDLISKDTLRDRLLESVGDLGEEEDVRMSKLDAVGCYYIEKALKDTVTLDYSKLPTHLARFVHWGRNVLKEYEVNFESEPTSLLEDVRNLDAQGELLCLMGENLVDILAGRIEPLEVMLTDGRLMRHYEADVANAHLSKIIGYLTENMADLEPWQRILEIGGGTAGTTLPVLEGLSRNRDEPGCLDYTFTDISSGFFEMASKKLSRWSQQITYKRLDITQDPAMQGFTQESYDVVVAANVLHATADMVTTMTHVRSLLKPGGKLILLEATRHPPWLLPFTLLPDWWAAKDKYRDHKQGPMMPAVVWNDLLLDSGFSGVDVVIPTNYRTDNPLMNVVCSTRIGKQDDSETITICGPLVDDTEVNFAQSVARSISKELGCPTEIKRFADIKPDDESYYILLDSKHESVFQNFNPGKFECLKSLLLRNKGLLWVTAKGCSPDAKMIQGMVRTVRLEVEPKNLMLLDNVPSTPEGLSGILKLAARLRDPEVSRDQDMDFAWHDGAIHLPRMRQLKDLKEQFSVEEGVAFRRTQNLRDNSDRGLEMTIQAAGSPDTIYFRRTDPYEVSEDEVLVRVEAAGVGHRDFEVLMGSIPWAPPGYEGAGKVLKIGSQVSHLREGDDVFFLTPEASAFATEVKLASWLVARIPKNMTVTDAAACPLGYCLATLAFRTARLTKNETVLIHSAASSVGQACILLAQDIGARIYVTAGTEDKRDYLHQALGIPRDHIFSSRTAEFRDSLLCKTNNRGVDVVVNSLSGELLTETWAVIAAFGRFVEIGKKDAFLNNSLPMRPFNNNVTLSAIDLRDLYHHRPDDVRSVWNEVVNLLQRKQVRPVDSASVVSISHFSAALRILRSRDHIGRLVVTLGDDNSVMAETALRPSQVSLKDDATYLVAGGTRGIGLDLAYWMIEHGARNIVLLGRSGASGPEAQKILNKFRNTKVCVRAVACNVGDRDELQNALESIKDLPAIRGVVHSALLLSDKLFVNASYEDWVINTTPRVAGAWNLDDLLPTDLDFFVALSSFNGDTGHTGQAIYAGTAGFYNAFSQYRNNRGQYTVSIGLPVVLDVGYVADHDLRGGLLNDSLSAGVTMADIRATFNCILLGPSSPFVRNGRASTFKVYINGQPVQDVTWNYFHPAHSKVRLTNANRNKVKATSGGAEISSASWTTAEDPLTGLIEALIAKVSAMTMMEREDVLPDAPLASYSLDSLVSVELRNWIRRETTAEMTLVSITKAENLRALAVNILAQRKAG</sequence>
<dbReference type="EC" id="2.3.1.-" evidence="7"/>
<dbReference type="EMBL" id="AB725683">
    <property type="protein sequence ID" value="BAN19720.1"/>
    <property type="molecule type" value="Genomic_DNA"/>
</dbReference>
<dbReference type="SMR" id="R4WH05"/>
<dbReference type="VEuPathDB" id="FungiDB:CC77DRAFT_1012953"/>
<dbReference type="GO" id="GO:0004315">
    <property type="term" value="F:3-oxoacyl-[acyl-carrier-protein] synthase activity"/>
    <property type="evidence" value="ECO:0007669"/>
    <property type="project" value="InterPro"/>
</dbReference>
<dbReference type="GO" id="GO:0004312">
    <property type="term" value="F:fatty acid synthase activity"/>
    <property type="evidence" value="ECO:0007669"/>
    <property type="project" value="TreeGrafter"/>
</dbReference>
<dbReference type="GO" id="GO:0008168">
    <property type="term" value="F:methyltransferase activity"/>
    <property type="evidence" value="ECO:0007669"/>
    <property type="project" value="UniProtKB-KW"/>
</dbReference>
<dbReference type="GO" id="GO:0016491">
    <property type="term" value="F:oxidoreductase activity"/>
    <property type="evidence" value="ECO:0007669"/>
    <property type="project" value="UniProtKB-KW"/>
</dbReference>
<dbReference type="GO" id="GO:0031177">
    <property type="term" value="F:phosphopantetheine binding"/>
    <property type="evidence" value="ECO:0007669"/>
    <property type="project" value="InterPro"/>
</dbReference>
<dbReference type="GO" id="GO:0006633">
    <property type="term" value="P:fatty acid biosynthetic process"/>
    <property type="evidence" value="ECO:0007669"/>
    <property type="project" value="InterPro"/>
</dbReference>
<dbReference type="GO" id="GO:0032259">
    <property type="term" value="P:methylation"/>
    <property type="evidence" value="ECO:0007669"/>
    <property type="project" value="UniProtKB-KW"/>
</dbReference>
<dbReference type="GO" id="GO:0044550">
    <property type="term" value="P:secondary metabolite biosynthetic process"/>
    <property type="evidence" value="ECO:0007669"/>
    <property type="project" value="UniProtKB-ARBA"/>
</dbReference>
<dbReference type="CDD" id="cd02440">
    <property type="entry name" value="AdoMet_MTases"/>
    <property type="match status" value="1"/>
</dbReference>
<dbReference type="CDD" id="cd05195">
    <property type="entry name" value="enoyl_red"/>
    <property type="match status" value="1"/>
</dbReference>
<dbReference type="CDD" id="cd00833">
    <property type="entry name" value="PKS"/>
    <property type="match status" value="1"/>
</dbReference>
<dbReference type="Gene3D" id="3.40.47.10">
    <property type="match status" value="1"/>
</dbReference>
<dbReference type="Gene3D" id="1.10.1200.10">
    <property type="entry name" value="ACP-like"/>
    <property type="match status" value="1"/>
</dbReference>
<dbReference type="Gene3D" id="3.40.366.10">
    <property type="entry name" value="Malonyl-Coenzyme A Acyl Carrier Protein, domain 2"/>
    <property type="match status" value="1"/>
</dbReference>
<dbReference type="Gene3D" id="3.90.180.10">
    <property type="entry name" value="Medium-chain alcohol dehydrogenases, catalytic domain"/>
    <property type="match status" value="1"/>
</dbReference>
<dbReference type="Gene3D" id="3.40.50.720">
    <property type="entry name" value="NAD(P)-binding Rossmann-like Domain"/>
    <property type="match status" value="1"/>
</dbReference>
<dbReference type="Gene3D" id="3.10.129.110">
    <property type="entry name" value="Polyketide synthase dehydratase"/>
    <property type="match status" value="1"/>
</dbReference>
<dbReference type="Gene3D" id="3.40.50.150">
    <property type="entry name" value="Vaccinia Virus protein VP39"/>
    <property type="match status" value="1"/>
</dbReference>
<dbReference type="InterPro" id="IPR001227">
    <property type="entry name" value="Ac_transferase_dom_sf"/>
</dbReference>
<dbReference type="InterPro" id="IPR036736">
    <property type="entry name" value="ACP-like_sf"/>
</dbReference>
<dbReference type="InterPro" id="IPR014043">
    <property type="entry name" value="Acyl_transferase_dom"/>
</dbReference>
<dbReference type="InterPro" id="IPR016035">
    <property type="entry name" value="Acyl_Trfase/lysoPLipase"/>
</dbReference>
<dbReference type="InterPro" id="IPR013154">
    <property type="entry name" value="ADH-like_N"/>
</dbReference>
<dbReference type="InterPro" id="IPR011032">
    <property type="entry name" value="GroES-like_sf"/>
</dbReference>
<dbReference type="InterPro" id="IPR018201">
    <property type="entry name" value="Ketoacyl_synth_AS"/>
</dbReference>
<dbReference type="InterPro" id="IPR014031">
    <property type="entry name" value="Ketoacyl_synth_C"/>
</dbReference>
<dbReference type="InterPro" id="IPR014030">
    <property type="entry name" value="Ketoacyl_synth_N"/>
</dbReference>
<dbReference type="InterPro" id="IPR016036">
    <property type="entry name" value="Malonyl_transacylase_ACP-bd"/>
</dbReference>
<dbReference type="InterPro" id="IPR013217">
    <property type="entry name" value="Methyltransf_12"/>
</dbReference>
<dbReference type="InterPro" id="IPR036291">
    <property type="entry name" value="NAD(P)-bd_dom_sf"/>
</dbReference>
<dbReference type="InterPro" id="IPR020841">
    <property type="entry name" value="PKS_Beta-ketoAc_synthase_dom"/>
</dbReference>
<dbReference type="InterPro" id="IPR042104">
    <property type="entry name" value="PKS_dehydratase_sf"/>
</dbReference>
<dbReference type="InterPro" id="IPR020807">
    <property type="entry name" value="PKS_DH"/>
</dbReference>
<dbReference type="InterPro" id="IPR049552">
    <property type="entry name" value="PKS_DH_N"/>
</dbReference>
<dbReference type="InterPro" id="IPR020843">
    <property type="entry name" value="PKS_ER"/>
</dbReference>
<dbReference type="InterPro" id="IPR013968">
    <property type="entry name" value="PKS_KR"/>
</dbReference>
<dbReference type="InterPro" id="IPR049900">
    <property type="entry name" value="PKS_mFAS_DH"/>
</dbReference>
<dbReference type="InterPro" id="IPR050091">
    <property type="entry name" value="PKS_NRPS_Biosynth_Enz"/>
</dbReference>
<dbReference type="InterPro" id="IPR020806">
    <property type="entry name" value="PKS_PP-bd"/>
</dbReference>
<dbReference type="InterPro" id="IPR009081">
    <property type="entry name" value="PP-bd_ACP"/>
</dbReference>
<dbReference type="InterPro" id="IPR029063">
    <property type="entry name" value="SAM-dependent_MTases_sf"/>
</dbReference>
<dbReference type="InterPro" id="IPR016039">
    <property type="entry name" value="Thiolase-like"/>
</dbReference>
<dbReference type="PANTHER" id="PTHR43775:SF29">
    <property type="entry name" value="ASPERFURANONE POLYKETIDE SYNTHASE AFOG-RELATED"/>
    <property type="match status" value="1"/>
</dbReference>
<dbReference type="PANTHER" id="PTHR43775">
    <property type="entry name" value="FATTY ACID SYNTHASE"/>
    <property type="match status" value="1"/>
</dbReference>
<dbReference type="Pfam" id="PF23297">
    <property type="entry name" value="ACP_SdgA_C"/>
    <property type="match status" value="1"/>
</dbReference>
<dbReference type="Pfam" id="PF00698">
    <property type="entry name" value="Acyl_transf_1"/>
    <property type="match status" value="1"/>
</dbReference>
<dbReference type="Pfam" id="PF08240">
    <property type="entry name" value="ADH_N"/>
    <property type="match status" value="1"/>
</dbReference>
<dbReference type="Pfam" id="PF13602">
    <property type="entry name" value="ADH_zinc_N_2"/>
    <property type="match status" value="1"/>
</dbReference>
<dbReference type="Pfam" id="PF22621">
    <property type="entry name" value="CurL-like_PKS_C"/>
    <property type="match status" value="1"/>
</dbReference>
<dbReference type="Pfam" id="PF00109">
    <property type="entry name" value="ketoacyl-synt"/>
    <property type="match status" value="1"/>
</dbReference>
<dbReference type="Pfam" id="PF02801">
    <property type="entry name" value="Ketoacyl-synt_C"/>
    <property type="match status" value="1"/>
</dbReference>
<dbReference type="Pfam" id="PF08659">
    <property type="entry name" value="KR"/>
    <property type="match status" value="1"/>
</dbReference>
<dbReference type="Pfam" id="PF08242">
    <property type="entry name" value="Methyltransf_12"/>
    <property type="match status" value="1"/>
</dbReference>
<dbReference type="Pfam" id="PF21089">
    <property type="entry name" value="PKS_DH_N"/>
    <property type="match status" value="1"/>
</dbReference>
<dbReference type="SMART" id="SM00827">
    <property type="entry name" value="PKS_AT"/>
    <property type="match status" value="1"/>
</dbReference>
<dbReference type="SMART" id="SM00826">
    <property type="entry name" value="PKS_DH"/>
    <property type="match status" value="1"/>
</dbReference>
<dbReference type="SMART" id="SM00829">
    <property type="entry name" value="PKS_ER"/>
    <property type="match status" value="1"/>
</dbReference>
<dbReference type="SMART" id="SM00822">
    <property type="entry name" value="PKS_KR"/>
    <property type="match status" value="1"/>
</dbReference>
<dbReference type="SMART" id="SM00825">
    <property type="entry name" value="PKS_KS"/>
    <property type="match status" value="1"/>
</dbReference>
<dbReference type="SMART" id="SM00823">
    <property type="entry name" value="PKS_PP"/>
    <property type="match status" value="1"/>
</dbReference>
<dbReference type="SUPFAM" id="SSF47336">
    <property type="entry name" value="ACP-like"/>
    <property type="match status" value="1"/>
</dbReference>
<dbReference type="SUPFAM" id="SSF52151">
    <property type="entry name" value="FabD/lysophospholipase-like"/>
    <property type="match status" value="1"/>
</dbReference>
<dbReference type="SUPFAM" id="SSF50129">
    <property type="entry name" value="GroES-like"/>
    <property type="match status" value="1"/>
</dbReference>
<dbReference type="SUPFAM" id="SSF51735">
    <property type="entry name" value="NAD(P)-binding Rossmann-fold domains"/>
    <property type="match status" value="2"/>
</dbReference>
<dbReference type="SUPFAM" id="SSF55048">
    <property type="entry name" value="Probable ACP-binding domain of malonyl-CoA ACP transacylase"/>
    <property type="match status" value="1"/>
</dbReference>
<dbReference type="SUPFAM" id="SSF53335">
    <property type="entry name" value="S-adenosyl-L-methionine-dependent methyltransferases"/>
    <property type="match status" value="1"/>
</dbReference>
<dbReference type="SUPFAM" id="SSF53901">
    <property type="entry name" value="Thiolase-like"/>
    <property type="match status" value="1"/>
</dbReference>
<dbReference type="PROSITE" id="PS50075">
    <property type="entry name" value="CARRIER"/>
    <property type="match status" value="1"/>
</dbReference>
<dbReference type="PROSITE" id="PS00606">
    <property type="entry name" value="KS3_1"/>
    <property type="match status" value="1"/>
</dbReference>
<dbReference type="PROSITE" id="PS52004">
    <property type="entry name" value="KS3_2"/>
    <property type="match status" value="1"/>
</dbReference>
<dbReference type="PROSITE" id="PS52019">
    <property type="entry name" value="PKS_MFAS_DH"/>
    <property type="match status" value="1"/>
</dbReference>
<reference key="1">
    <citation type="journal article" date="2012" name="Mol. Plant Microbe Interact.">
        <title>A polyketide synthase gene, ACRTS2, is responsible for biosynthesis of host-selective ACR-toxin in the rough lemon pathotype of Alternaria alternata.</title>
        <authorList>
            <person name="Izumi Y."/>
            <person name="Ohtani K."/>
            <person name="Miyamoto Y."/>
            <person name="Masunaka A."/>
            <person name="Fukumoto T."/>
            <person name="Gomi K."/>
            <person name="Tada Y."/>
            <person name="Ichimura K."/>
            <person name="Peever T.L."/>
            <person name="Akimitsu K."/>
        </authorList>
    </citation>
    <scope>NUCLEOTIDE SEQUENCE [GENOMIC DNA]</scope>
    <scope>FUNCTION</scope>
    <scope>DOMAIN</scope>
    <scope>DISRUPTION PHENOTYPE</scope>
    <source>
        <strain>HC1</strain>
    </source>
</reference>
<reference key="2">
    <citation type="journal article" date="2012" name="Phytopathology">
        <title>Role of the pathotype-specific ACRTS1 gene encoding a hydroxylase involved in the biosynthesis of host-selective ACR-toxin in the rough lemon pathotype of Alternaria alternata.</title>
        <authorList>
            <person name="Izumi Y."/>
            <person name="Kamei E."/>
            <person name="Miyamoto Y."/>
            <person name="Ohtani K."/>
            <person name="Masunaka A."/>
            <person name="Fukumoto T."/>
            <person name="Gomi K."/>
            <person name="Tada Y."/>
            <person name="Ichimura K."/>
            <person name="Peever T.L."/>
            <person name="Akimitsu K."/>
        </authorList>
    </citation>
    <scope>FUNCTION</scope>
    <source>
        <strain>HC1</strain>
    </source>
</reference>
<reference key="3">
    <citation type="journal article" date="2013" name="FEMS Microbiol. Rev.">
        <title>Host-selective toxins produced by the plant pathogenic fungus Alternaria alternata.</title>
        <authorList>
            <person name="Tsuge T."/>
            <person name="Harimoto Y."/>
            <person name="Akimitsu K."/>
            <person name="Ohtani K."/>
            <person name="Kodama M."/>
            <person name="Akagi Y."/>
            <person name="Egusa M."/>
            <person name="Yamamoto M."/>
            <person name="Otani H."/>
        </authorList>
    </citation>
    <scope>REVIEW ON HOST-SELECTIVE TOXINS</scope>
</reference>
<organism>
    <name type="scientific">Alternaria alternata</name>
    <name type="common">Alternaria rot fungus</name>
    <name type="synonym">Torula alternata</name>
    <dbReference type="NCBI Taxonomy" id="5599"/>
    <lineage>
        <taxon>Eukaryota</taxon>
        <taxon>Fungi</taxon>
        <taxon>Dikarya</taxon>
        <taxon>Ascomycota</taxon>
        <taxon>Pezizomycotina</taxon>
        <taxon>Dothideomycetes</taxon>
        <taxon>Pleosporomycetidae</taxon>
        <taxon>Pleosporales</taxon>
        <taxon>Pleosporineae</taxon>
        <taxon>Pleosporaceae</taxon>
        <taxon>Alternaria</taxon>
        <taxon>Alternaria sect. Alternaria</taxon>
        <taxon>Alternaria alternata complex</taxon>
    </lineage>
</organism>
<gene>
    <name evidence="8" type="primary">ACRTS2</name>
</gene>
<protein>
    <recommendedName>
        <fullName evidence="8">Highly reducing polyketide synthase ACRTS2</fullName>
        <shortName evidence="10">HR-PKS ACRTS2</shortName>
        <ecNumber evidence="7">2.3.1.-</ecNumber>
    </recommendedName>
    <alternativeName>
        <fullName evidence="8">ACR-toxin biosynthesis protein S2</fullName>
    </alternativeName>
</protein>
<evidence type="ECO:0000255" key="1"/>
<evidence type="ECO:0000255" key="2">
    <source>
        <dbReference type="PROSITE-ProRule" id="PRU00258"/>
    </source>
</evidence>
<evidence type="ECO:0000255" key="3">
    <source>
        <dbReference type="PROSITE-ProRule" id="PRU01348"/>
    </source>
</evidence>
<evidence type="ECO:0000255" key="4">
    <source>
        <dbReference type="PROSITE-ProRule" id="PRU01363"/>
    </source>
</evidence>
<evidence type="ECO:0000255" key="5">
    <source>
        <dbReference type="PROSITE-ProRule" id="PRU10022"/>
    </source>
</evidence>
<evidence type="ECO:0000269" key="6">
    <source>
    </source>
</evidence>
<evidence type="ECO:0000269" key="7">
    <source>
    </source>
</evidence>
<evidence type="ECO:0000303" key="8">
    <source>
    </source>
</evidence>
<evidence type="ECO:0000303" key="9">
    <source>
    </source>
</evidence>
<evidence type="ECO:0000305" key="10"/>
<evidence type="ECO:0000305" key="11">
    <source>
    </source>
</evidence>
<keyword id="KW-0012">Acyltransferase</keyword>
<keyword id="KW-0489">Methyltransferase</keyword>
<keyword id="KW-0511">Multifunctional enzyme</keyword>
<keyword id="KW-0521">NADP</keyword>
<keyword id="KW-0560">Oxidoreductase</keyword>
<keyword id="KW-0596">Phosphopantetheine</keyword>
<keyword id="KW-0597">Phosphoprotein</keyword>
<keyword id="KW-0949">S-adenosyl-L-methionine</keyword>
<keyword id="KW-0808">Transferase</keyword>
<keyword id="KW-0843">Virulence</keyword>
<name>ACRS2_ALTAL</name>
<feature type="chain" id="PRO_0000444852" description="Highly reducing polyketide synthase ACRTS2">
    <location>
        <begin position="1"/>
        <end position="2513"/>
    </location>
</feature>
<feature type="domain" description="Ketosynthase family 3 (KS3)" evidence="3 11">
    <location>
        <begin position="4"/>
        <end position="429"/>
    </location>
</feature>
<feature type="domain" description="PKS/mFAS DH" evidence="4">
    <location>
        <begin position="942"/>
        <end position="1254"/>
    </location>
</feature>
<feature type="domain" description="Carrier" evidence="2 11">
    <location>
        <begin position="2433"/>
        <end position="2510"/>
    </location>
</feature>
<feature type="region of interest" description="Malonyl-CoA:ACP transacylase (MAT) domain" evidence="1 11">
    <location>
        <begin position="547"/>
        <end position="875"/>
    </location>
</feature>
<feature type="region of interest" description="Dehydratase (DH) domain" evidence="1 11">
    <location>
        <begin position="942"/>
        <end position="1253"/>
    </location>
</feature>
<feature type="region of interest" description="N-terminal hotdog fold" evidence="4">
    <location>
        <begin position="942"/>
        <end position="1074"/>
    </location>
</feature>
<feature type="region of interest" description="C-terminal hotdog fold" evidence="4">
    <location>
        <begin position="1092"/>
        <end position="1254"/>
    </location>
</feature>
<feature type="region of interest" description="Methyltransferase (CMet) domain" evidence="1 11">
    <location>
        <begin position="1407"/>
        <end position="1600"/>
    </location>
</feature>
<feature type="region of interest" description="Enoylreductase (ER) domain" evidence="1 11">
    <location>
        <begin position="1816"/>
        <end position="2127"/>
    </location>
</feature>
<feature type="region of interest" description="Ketoreductase (KR) domain" evidence="1 11">
    <location>
        <begin position="2152"/>
        <end position="2327"/>
    </location>
</feature>
<feature type="active site" description="For beta-ketoacyl synthase activity" evidence="3">
    <location>
        <position position="174"/>
    </location>
</feature>
<feature type="active site" description="For beta-ketoacyl synthase activity" evidence="3">
    <location>
        <position position="313"/>
    </location>
</feature>
<feature type="active site" description="For beta-ketoacyl synthase activity" evidence="3">
    <location>
        <position position="353"/>
    </location>
</feature>
<feature type="active site" description="For malonyltransferase activity" evidence="5">
    <location>
        <position position="635"/>
    </location>
</feature>
<feature type="active site" description="Proton acceptor; for dehydratase activity" evidence="4">
    <location>
        <position position="974"/>
    </location>
</feature>
<feature type="active site" description="Proton donor; for dehydratase activity" evidence="4">
    <location>
        <position position="1161"/>
    </location>
</feature>
<feature type="modified residue" description="O-(pantetheine 4'-phosphoryl)serine" evidence="2">
    <location>
        <position position="2470"/>
    </location>
</feature>